<feature type="chain" id="PRO_0000181995" description="Receptor-transporting protein 4">
    <location>
        <begin position="1"/>
        <end position="246"/>
    </location>
</feature>
<feature type="topological domain" description="Cytoplasmic" evidence="2">
    <location>
        <begin position="1"/>
        <end position="224"/>
    </location>
</feature>
<feature type="transmembrane region" description="Helical" evidence="2">
    <location>
        <begin position="225"/>
        <end position="245"/>
    </location>
</feature>
<feature type="zinc finger region" description="3CxxC-type" evidence="2">
    <location>
        <begin position="48"/>
        <end position="159"/>
    </location>
</feature>
<feature type="sequence variant" id="VAR_057732" description="In dbSNP:rs1047584.">
    <original>T</original>
    <variation>I</variation>
    <location>
        <position position="79"/>
    </location>
</feature>
<feature type="sequence variant" id="VAR_057733" description="In dbSNP:rs35224605.">
    <original>S</original>
    <variation>N</variation>
    <location>
        <position position="168"/>
    </location>
</feature>
<feature type="mutagenesis site" description="Loss of interaction with influenza virus NS1." evidence="6">
    <original>C</original>
    <variation>A</variation>
    <location>
        <position position="55"/>
    </location>
</feature>
<feature type="mutagenesis site" description="Loss of interaction with influenza virus NS1." evidence="6">
    <original>C</original>
    <variation>A</variation>
    <location>
        <position position="93"/>
    </location>
</feature>
<feature type="mutagenesis site" description="Almost complete loss of influenza NA viral RNA binding and loss of interaction with influenza virus NS1." evidence="6">
    <original>H</original>
    <variation>A</variation>
    <location>
        <position position="149"/>
    </location>
</feature>
<feature type="mutagenesis site" description="Complete loss of influenza NA viral RNA binding and loss of interaction with influenza virus NS1." evidence="6">
    <original>C</original>
    <variation>A</variation>
    <location>
        <position position="154"/>
    </location>
</feature>
<feature type="sequence conflict" description="In Ref. 1; AAT70683 and 2; CAC14309." evidence="7" ref="1 2">
    <original>QV</original>
    <variation>KL</variation>
    <location>
        <begin position="66"/>
        <end position="67"/>
    </location>
</feature>
<feature type="sequence conflict" description="In Ref. 1; AAT70683, 2; CAC14309 and 4; AAH13161." evidence="7" ref="1 2 4">
    <original>T</original>
    <variation>M</variation>
    <location>
        <position position="131"/>
    </location>
</feature>
<feature type="sequence conflict" description="In Ref. 1; AAT70683, 2; CAC14309 and 4; AAH13161." evidence="7" ref="1 2 4">
    <original>C</original>
    <variation>Y</variation>
    <location>
        <position position="169"/>
    </location>
</feature>
<feature type="sequence conflict" description="In Ref. 1; AAT70683, 2; CAC14309 and 4; AAH13161." evidence="7" ref="1 2 4">
    <original>A</original>
    <variation>D</variation>
    <location>
        <position position="204"/>
    </location>
</feature>
<comment type="function">
    <text evidence="1 3 4 5 6">Chaperone protein that facilitates the trafficking and functional cell surface expression of some G-protein coupled receptors (GPCRs) (PubMed:18836069). Promotes functional expression of the bitter taste receptor TAS2R16 (PubMed:16720576). Also promotes functional expression of the opioid receptor heterodimer OPRD1-OPRM1 (By similarity). In addition, acts as a potent IFN-inducible suppressor of pathogens including lyssavirus rabies, influenza A or yellow fever virus (PubMed:33113352). Mechanistically, associates with the viral replicase, binds viral RNA, and thereby suppresses viral genome amplification that replicates at the endoplasmic reticulum (By similarity). In addition, restores antiviral signaling by interacting with and sequestering influenza A virus protein NS1 (PubMed:39798334).</text>
</comment>
<comment type="subunit">
    <text evidence="1 3">Interacts with TASR16 (PubMed:16720576). Interacts with OPRD1 and OPRM1; the interaction promotes cell surface localization of the OPDR1-OPRM1 heterodimer (By similarity).</text>
</comment>
<comment type="subunit">
    <text evidence="6">(Microbial infection) Interacts with influenza A virus protein NS1; this interaction sequesters NS1 from interacting with RIG-I/DDX58 to restore antiviral signaling.</text>
</comment>
<comment type="interaction">
    <interactant intactId="EBI-12275482">
        <id>Q96DX8</id>
    </interactant>
    <interactant intactId="EBI-12831318">
        <id>Q96Q80</id>
        <label>DERL3</label>
    </interactant>
    <organismsDiffer>false</organismsDiffer>
    <experiments>3</experiments>
</comment>
<comment type="interaction">
    <interactant intactId="EBI-12275482">
        <id>Q96DX8</id>
    </interactant>
    <interactant intactId="EBI-356015">
        <id>Q14204</id>
        <label>DYNC1H1</label>
    </interactant>
    <organismsDiffer>false</organismsDiffer>
    <experiments>3</experiments>
</comment>
<comment type="interaction">
    <interactant intactId="EBI-12275482">
        <id>Q96DX8</id>
    </interactant>
    <interactant intactId="EBI-10262547">
        <id>Q8IXM6</id>
        <label>NRM</label>
    </interactant>
    <organismsDiffer>false</organismsDiffer>
    <experiments>3</experiments>
</comment>
<comment type="interaction">
    <interactant intactId="EBI-12275482">
        <id>Q96DX8</id>
    </interactant>
    <interactant intactId="EBI-7545592">
        <id>Q9H6H4</id>
        <label>REEP4</label>
    </interactant>
    <organismsDiffer>false</organismsDiffer>
    <experiments>3</experiments>
</comment>
<comment type="interaction">
    <interactant intactId="EBI-12275482">
        <id>Q96DX8</id>
    </interactant>
    <interactant intactId="EBI-12963900">
        <id>Q9NYW0</id>
        <label>TAS2R10</label>
    </interactant>
    <organismsDiffer>false</organismsDiffer>
    <experiments>3</experiments>
</comment>
<comment type="interaction">
    <interactant intactId="EBI-12275482">
        <id>Q96DX8</id>
    </interactant>
    <interactant intactId="EBI-11988865">
        <id>A5PKU2</id>
        <label>TUSC5</label>
    </interactant>
    <organismsDiffer>false</organismsDiffer>
    <experiments>3</experiments>
</comment>
<comment type="subcellular location">
    <subcellularLocation>
        <location evidence="7">Membrane</location>
        <topology evidence="7">Single-pass type III membrane protein</topology>
    </subcellularLocation>
    <subcellularLocation>
        <location evidence="6">Cytoplasm</location>
    </subcellularLocation>
</comment>
<comment type="tissue specificity">
    <text evidence="3">Expressed in circumvallate papillae and testis.</text>
</comment>
<comment type="induction">
    <text evidence="6">By interferons. Upon influenza virus infection (PubMed:39798334).</text>
</comment>
<comment type="similarity">
    <text evidence="7">Belongs to the TMEM7 family.</text>
</comment>
<evidence type="ECO:0000250" key="1">
    <source>
        <dbReference type="UniProtKB" id="Q9ER80"/>
    </source>
</evidence>
<evidence type="ECO:0000255" key="2"/>
<evidence type="ECO:0000269" key="3">
    <source>
    </source>
</evidence>
<evidence type="ECO:0000269" key="4">
    <source>
    </source>
</evidence>
<evidence type="ECO:0000269" key="5">
    <source>
    </source>
</evidence>
<evidence type="ECO:0000269" key="6">
    <source>
    </source>
</evidence>
<evidence type="ECO:0000305" key="7"/>
<name>RTP4_HUMAN</name>
<accession>Q96DX8</accession>
<accession>Q9H4F3</accession>
<reference key="1">
    <citation type="journal article" date="2004" name="Cell">
        <title>RTP family members induce functional expression of mammalian odorant receptors.</title>
        <authorList>
            <person name="Saito H."/>
            <person name="Kubota M."/>
            <person name="Roberts R.W."/>
            <person name="Chi Q."/>
            <person name="Matsunami H."/>
        </authorList>
    </citation>
    <scope>NUCLEOTIDE SEQUENCE [MRNA]</scope>
</reference>
<reference key="2">
    <citation type="submission" date="1999-12" db="EMBL/GenBank/DDBJ databases">
        <title>Characterization of the human IFRG28, a new interferon responsive gene.</title>
        <authorList>
            <person name="Meritet J.F."/>
            <person name="Dron M."/>
            <person name="Tovey M.G."/>
        </authorList>
    </citation>
    <scope>NUCLEOTIDE SEQUENCE [MRNA]</scope>
</reference>
<reference key="3">
    <citation type="journal article" date="2006" name="Nature">
        <title>The DNA sequence, annotation and analysis of human chromosome 3.</title>
        <authorList>
            <person name="Muzny D.M."/>
            <person name="Scherer S.E."/>
            <person name="Kaul R."/>
            <person name="Wang J."/>
            <person name="Yu J."/>
            <person name="Sudbrak R."/>
            <person name="Buhay C.J."/>
            <person name="Chen R."/>
            <person name="Cree A."/>
            <person name="Ding Y."/>
            <person name="Dugan-Rocha S."/>
            <person name="Gill R."/>
            <person name="Gunaratne P."/>
            <person name="Harris R.A."/>
            <person name="Hawes A.C."/>
            <person name="Hernandez J."/>
            <person name="Hodgson A.V."/>
            <person name="Hume J."/>
            <person name="Jackson A."/>
            <person name="Khan Z.M."/>
            <person name="Kovar-Smith C."/>
            <person name="Lewis L.R."/>
            <person name="Lozado R.J."/>
            <person name="Metzker M.L."/>
            <person name="Milosavljevic A."/>
            <person name="Miner G.R."/>
            <person name="Morgan M.B."/>
            <person name="Nazareth L.V."/>
            <person name="Scott G."/>
            <person name="Sodergren E."/>
            <person name="Song X.-Z."/>
            <person name="Steffen D."/>
            <person name="Wei S."/>
            <person name="Wheeler D.A."/>
            <person name="Wright M.W."/>
            <person name="Worley K.C."/>
            <person name="Yuan Y."/>
            <person name="Zhang Z."/>
            <person name="Adams C.Q."/>
            <person name="Ansari-Lari M.A."/>
            <person name="Ayele M."/>
            <person name="Brown M.J."/>
            <person name="Chen G."/>
            <person name="Chen Z."/>
            <person name="Clendenning J."/>
            <person name="Clerc-Blankenburg K.P."/>
            <person name="Chen R."/>
            <person name="Chen Z."/>
            <person name="Davis C."/>
            <person name="Delgado O."/>
            <person name="Dinh H.H."/>
            <person name="Dong W."/>
            <person name="Draper H."/>
            <person name="Ernst S."/>
            <person name="Fu G."/>
            <person name="Gonzalez-Garay M.L."/>
            <person name="Garcia D.K."/>
            <person name="Gillett W."/>
            <person name="Gu J."/>
            <person name="Hao B."/>
            <person name="Haugen E."/>
            <person name="Havlak P."/>
            <person name="He X."/>
            <person name="Hennig S."/>
            <person name="Hu S."/>
            <person name="Huang W."/>
            <person name="Jackson L.R."/>
            <person name="Jacob L.S."/>
            <person name="Kelly S.H."/>
            <person name="Kube M."/>
            <person name="Levy R."/>
            <person name="Li Z."/>
            <person name="Liu B."/>
            <person name="Liu J."/>
            <person name="Liu W."/>
            <person name="Lu J."/>
            <person name="Maheshwari M."/>
            <person name="Nguyen B.-V."/>
            <person name="Okwuonu G.O."/>
            <person name="Palmeiri A."/>
            <person name="Pasternak S."/>
            <person name="Perez L.M."/>
            <person name="Phelps K.A."/>
            <person name="Plopper F.J."/>
            <person name="Qiang B."/>
            <person name="Raymond C."/>
            <person name="Rodriguez R."/>
            <person name="Saenphimmachak C."/>
            <person name="Santibanez J."/>
            <person name="Shen H."/>
            <person name="Shen Y."/>
            <person name="Subramanian S."/>
            <person name="Tabor P.E."/>
            <person name="Verduzco D."/>
            <person name="Waldron L."/>
            <person name="Wang J."/>
            <person name="Wang J."/>
            <person name="Wang Q."/>
            <person name="Williams G.A."/>
            <person name="Wong G.K.-S."/>
            <person name="Yao Z."/>
            <person name="Zhang J."/>
            <person name="Zhang X."/>
            <person name="Zhao G."/>
            <person name="Zhou J."/>
            <person name="Zhou Y."/>
            <person name="Nelson D."/>
            <person name="Lehrach H."/>
            <person name="Reinhardt R."/>
            <person name="Naylor S.L."/>
            <person name="Yang H."/>
            <person name="Olson M."/>
            <person name="Weinstock G."/>
            <person name="Gibbs R.A."/>
        </authorList>
    </citation>
    <scope>NUCLEOTIDE SEQUENCE [LARGE SCALE GENOMIC DNA]</scope>
</reference>
<reference key="4">
    <citation type="journal article" date="2004" name="Genome Res.">
        <title>The status, quality, and expansion of the NIH full-length cDNA project: the Mammalian Gene Collection (MGC).</title>
        <authorList>
            <consortium name="The MGC Project Team"/>
        </authorList>
    </citation>
    <scope>NUCLEOTIDE SEQUENCE [LARGE SCALE MRNA]</scope>
    <source>
        <tissue>Skin</tissue>
    </source>
</reference>
<reference key="5">
    <citation type="journal article" date="2006" name="J. Biol. Chem.">
        <title>Members of RTP and REEP gene families influence functional bitter taste receptor expression.</title>
        <authorList>
            <person name="Behrens M."/>
            <person name="Bartelt J."/>
            <person name="Reichling C."/>
            <person name="Winnig M."/>
            <person name="Kuhn C."/>
            <person name="Meyerhof W."/>
        </authorList>
    </citation>
    <scope>FUNCTION</scope>
    <scope>INTERACTION WITH TAS2R16</scope>
    <scope>TISSUE SPECIFICITY</scope>
</reference>
<reference key="6">
    <citation type="journal article" date="2008" name="Proc. Natl. Acad. Sci. U.S.A.">
        <title>Cell surface targeting of mu-delta opioid receptor heterodimers by RTP4.</title>
        <authorList>
            <person name="Decaillot F.M."/>
            <person name="Rozenfeld R."/>
            <person name="Gupta A."/>
            <person name="Devi L.A."/>
        </authorList>
    </citation>
    <scope>FUNCTION</scope>
</reference>
<reference key="7">
    <citation type="journal article" date="2020" name="Cell Host Microbe">
        <title>RTP4 Is a Potent IFN-Inducible Anti-flavivirus Effector Engaged in a Host-Virus Arms Race in Bats and Other Mammals.</title>
        <authorList>
            <person name="Boys I.N."/>
            <person name="Xu E."/>
            <person name="Mar K.B."/>
            <person name="De La Cruz-Rivera P.C."/>
            <person name="Eitson J.L."/>
            <person name="Moon B."/>
            <person name="Schoggins J.W."/>
        </authorList>
    </citation>
    <scope>FUNCTION</scope>
</reference>
<reference key="8">
    <citation type="journal article" date="2025" name="Virology">
        <title>RTP4 restricts influenza A virus infection by targeting the viral NS1 protein.</title>
        <authorList>
            <person name="Lv X."/>
            <person name="Zheng T."/>
            <person name="Lei X."/>
            <person name="Ren L."/>
            <person name="Zhao S."/>
            <person name="Wang J."/>
            <person name="Zhuo Z."/>
            <person name="Wang J."/>
        </authorList>
    </citation>
    <scope>FUNCTION</scope>
    <scope>INTERACTION WITH INFLUENZA VIRUS PROTEIN NS1 (MICROBIAL INFECTION)</scope>
    <scope>INDUCTION BY INFLUENZA VIRUS INFLECTION</scope>
    <scope>SUBCELLULAR LOCATION</scope>
    <scope>MUTAGENESIS OF CYS-55; CYS-93; HIS-149 AND CYS-154</scope>
</reference>
<organism>
    <name type="scientific">Homo sapiens</name>
    <name type="common">Human</name>
    <dbReference type="NCBI Taxonomy" id="9606"/>
    <lineage>
        <taxon>Eukaryota</taxon>
        <taxon>Metazoa</taxon>
        <taxon>Chordata</taxon>
        <taxon>Craniata</taxon>
        <taxon>Vertebrata</taxon>
        <taxon>Euteleostomi</taxon>
        <taxon>Mammalia</taxon>
        <taxon>Eutheria</taxon>
        <taxon>Euarchontoglires</taxon>
        <taxon>Primates</taxon>
        <taxon>Haplorrhini</taxon>
        <taxon>Catarrhini</taxon>
        <taxon>Hominidae</taxon>
        <taxon>Homo</taxon>
    </lineage>
</organism>
<protein>
    <recommendedName>
        <fullName>Receptor-transporting protein 4</fullName>
    </recommendedName>
    <alternativeName>
        <fullName>28 kDa interferon-responsive protein</fullName>
    </alternativeName>
    <alternativeName>
        <fullName>3CxxC-type zinc finger protein 4</fullName>
    </alternativeName>
</protein>
<sequence>MVVDFWTWEQTFQELIQEAKPRATWTLKLDGNLQLDCLAQGWKQYQQRAFGWFRCSSCQRSWASAQVQILCHTYWEHWTSQGQVRMRLFGQRCQKCSWSQYEMPEFSSDSTMRILSNLVQHILKKYYGNGTRKSPEMPVILEVSLEGSHDTANCEACTLGICGQGLKSCMTKPSKSLLPHLKTGNSSPGIGAVYLANQAKNQSAEAKEAKGSGYEKLGPSRDPDPLNICVFILLLVFIVVKCFTSE</sequence>
<gene>
    <name type="primary">RTP4</name>
    <name type="synonym">IFRG28</name>
    <name type="synonym">Z3CXXC4</name>
</gene>
<dbReference type="EMBL" id="AY562238">
    <property type="protein sequence ID" value="AAT70683.1"/>
    <property type="molecule type" value="mRNA"/>
</dbReference>
<dbReference type="EMBL" id="AJ251832">
    <property type="protein sequence ID" value="CAC14309.1"/>
    <property type="molecule type" value="mRNA"/>
</dbReference>
<dbReference type="EMBL" id="AC068299">
    <property type="status" value="NOT_ANNOTATED_CDS"/>
    <property type="molecule type" value="Genomic_DNA"/>
</dbReference>
<dbReference type="EMBL" id="BC013161">
    <property type="protein sequence ID" value="AAH13161.1"/>
    <property type="molecule type" value="mRNA"/>
</dbReference>
<dbReference type="CCDS" id="CCDS33910.1"/>
<dbReference type="RefSeq" id="NP_071430.2">
    <property type="nucleotide sequence ID" value="NM_022147.3"/>
</dbReference>
<dbReference type="BioGRID" id="122065">
    <property type="interactions" value="9"/>
</dbReference>
<dbReference type="FunCoup" id="Q96DX8">
    <property type="interactions" value="275"/>
</dbReference>
<dbReference type="IntAct" id="Q96DX8">
    <property type="interactions" value="11"/>
</dbReference>
<dbReference type="MINT" id="Q96DX8"/>
<dbReference type="STRING" id="9606.ENSP00000259030"/>
<dbReference type="iPTMnet" id="Q96DX8"/>
<dbReference type="PhosphoSitePlus" id="Q96DX8"/>
<dbReference type="BioMuta" id="RTP4"/>
<dbReference type="DMDM" id="313104193"/>
<dbReference type="jPOST" id="Q96DX8"/>
<dbReference type="MassIVE" id="Q96DX8"/>
<dbReference type="PaxDb" id="9606-ENSP00000259030"/>
<dbReference type="PeptideAtlas" id="Q96DX8"/>
<dbReference type="ProteomicsDB" id="76338"/>
<dbReference type="Antibodypedia" id="46841">
    <property type="antibodies" value="104 antibodies from 17 providers"/>
</dbReference>
<dbReference type="DNASU" id="64108"/>
<dbReference type="Ensembl" id="ENST00000259030.3">
    <property type="protein sequence ID" value="ENSP00000259030.2"/>
    <property type="gene ID" value="ENSG00000136514.3"/>
</dbReference>
<dbReference type="Ensembl" id="ENST00000707986.1">
    <property type="protein sequence ID" value="ENSP00000517060.1"/>
    <property type="gene ID" value="ENSG00000291555.1"/>
</dbReference>
<dbReference type="GeneID" id="64108"/>
<dbReference type="KEGG" id="hsa:64108"/>
<dbReference type="MANE-Select" id="ENST00000259030.3">
    <property type="protein sequence ID" value="ENSP00000259030.2"/>
    <property type="RefSeq nucleotide sequence ID" value="NM_022147.3"/>
    <property type="RefSeq protein sequence ID" value="NP_071430.2"/>
</dbReference>
<dbReference type="UCSC" id="uc003frm.4">
    <property type="organism name" value="human"/>
</dbReference>
<dbReference type="AGR" id="HGNC:23992"/>
<dbReference type="CTD" id="64108"/>
<dbReference type="DisGeNET" id="64108"/>
<dbReference type="GeneCards" id="RTP4"/>
<dbReference type="HGNC" id="HGNC:23992">
    <property type="gene designation" value="RTP4"/>
</dbReference>
<dbReference type="HPA" id="ENSG00000136514">
    <property type="expression patterns" value="Low tissue specificity"/>
</dbReference>
<dbReference type="MIM" id="609350">
    <property type="type" value="gene"/>
</dbReference>
<dbReference type="neXtProt" id="NX_Q96DX8"/>
<dbReference type="OpenTargets" id="ENSG00000136514"/>
<dbReference type="PharmGKB" id="PA143485606"/>
<dbReference type="VEuPathDB" id="HostDB:ENSG00000136514"/>
<dbReference type="eggNOG" id="ENOG502S085">
    <property type="taxonomic scope" value="Eukaryota"/>
</dbReference>
<dbReference type="GeneTree" id="ENSGT00940000162610"/>
<dbReference type="HOGENOM" id="CLU_045693_0_1_1"/>
<dbReference type="InParanoid" id="Q96DX8"/>
<dbReference type="OMA" id="WTWEQTF"/>
<dbReference type="OrthoDB" id="8121437at2759"/>
<dbReference type="PAN-GO" id="Q96DX8">
    <property type="GO annotations" value="5 GO annotations based on evolutionary models"/>
</dbReference>
<dbReference type="PhylomeDB" id="Q96DX8"/>
<dbReference type="TreeFam" id="TF333246"/>
<dbReference type="PathwayCommons" id="Q96DX8"/>
<dbReference type="SignaLink" id="Q96DX8"/>
<dbReference type="BioGRID-ORCS" id="64108">
    <property type="hits" value="6 hits in 1152 CRISPR screens"/>
</dbReference>
<dbReference type="ChiTaRS" id="RTP4">
    <property type="organism name" value="human"/>
</dbReference>
<dbReference type="GenomeRNAi" id="64108"/>
<dbReference type="Pharos" id="Q96DX8">
    <property type="development level" value="Tbio"/>
</dbReference>
<dbReference type="PRO" id="PR:Q96DX8"/>
<dbReference type="Proteomes" id="UP000005640">
    <property type="component" value="Chromosome 3"/>
</dbReference>
<dbReference type="RNAct" id="Q96DX8">
    <property type="molecule type" value="protein"/>
</dbReference>
<dbReference type="Bgee" id="ENSG00000136514">
    <property type="expression patterns" value="Expressed in epithelium of nasopharynx and 126 other cell types or tissues"/>
</dbReference>
<dbReference type="GO" id="GO:0005737">
    <property type="term" value="C:cytoplasm"/>
    <property type="evidence" value="ECO:0000314"/>
    <property type="project" value="HGNC-UCL"/>
</dbReference>
<dbReference type="GO" id="GO:0016020">
    <property type="term" value="C:membrane"/>
    <property type="evidence" value="ECO:0007669"/>
    <property type="project" value="UniProtKB-SubCell"/>
</dbReference>
<dbReference type="GO" id="GO:0031849">
    <property type="term" value="F:olfactory receptor binding"/>
    <property type="evidence" value="ECO:0000318"/>
    <property type="project" value="GO_Central"/>
</dbReference>
<dbReference type="GO" id="GO:0008270">
    <property type="term" value="F:zinc ion binding"/>
    <property type="evidence" value="ECO:0007669"/>
    <property type="project" value="UniProtKB-KW"/>
</dbReference>
<dbReference type="GO" id="GO:0051607">
    <property type="term" value="P:defense response to virus"/>
    <property type="evidence" value="ECO:0000314"/>
    <property type="project" value="UniProtKB"/>
</dbReference>
<dbReference type="GO" id="GO:0001580">
    <property type="term" value="P:detection of chemical stimulus involved in sensory perception of bitter taste"/>
    <property type="evidence" value="ECO:0000314"/>
    <property type="project" value="HGNC-UCL"/>
</dbReference>
<dbReference type="GO" id="GO:0051205">
    <property type="term" value="P:protein insertion into membrane"/>
    <property type="evidence" value="ECO:0000318"/>
    <property type="project" value="GO_Central"/>
</dbReference>
<dbReference type="GO" id="GO:0006612">
    <property type="term" value="P:protein targeting to membrane"/>
    <property type="evidence" value="ECO:0000314"/>
    <property type="project" value="HGNC-UCL"/>
</dbReference>
<dbReference type="InterPro" id="IPR026096">
    <property type="entry name" value="R-trans_p"/>
</dbReference>
<dbReference type="InterPro" id="IPR027377">
    <property type="entry name" value="ZAR1/RTP1-5-like_Znf-3CxxC"/>
</dbReference>
<dbReference type="PANTHER" id="PTHR14402">
    <property type="entry name" value="RECEPTOR TRANSPORTING PROTEIN"/>
    <property type="match status" value="1"/>
</dbReference>
<dbReference type="PANTHER" id="PTHR14402:SF8">
    <property type="entry name" value="RECEPTOR-TRANSPORTING PROTEIN 4"/>
    <property type="match status" value="1"/>
</dbReference>
<dbReference type="Pfam" id="PF13695">
    <property type="entry name" value="Zn_ribbon_3CxxC"/>
    <property type="match status" value="1"/>
</dbReference>
<dbReference type="SMART" id="SM01328">
    <property type="entry name" value="zf-3CxxC"/>
    <property type="match status" value="1"/>
</dbReference>
<keyword id="KW-0963">Cytoplasm</keyword>
<keyword id="KW-0472">Membrane</keyword>
<keyword id="KW-0479">Metal-binding</keyword>
<keyword id="KW-1267">Proteomics identification</keyword>
<keyword id="KW-1185">Reference proteome</keyword>
<keyword id="KW-0812">Transmembrane</keyword>
<keyword id="KW-1133">Transmembrane helix</keyword>
<keyword id="KW-0862">Zinc</keyword>
<keyword id="KW-0863">Zinc-finger</keyword>
<proteinExistence type="evidence at protein level"/>